<feature type="chain" id="PRO_0000416289" description="Putative RNA polymerase II subunit B1 CTD phosphatase rpap2">
    <location>
        <begin position="1"/>
        <end position="601"/>
    </location>
</feature>
<feature type="zinc finger region" description="RTR1-type" evidence="4">
    <location>
        <begin position="71"/>
        <end position="154"/>
    </location>
</feature>
<feature type="region of interest" description="Disordered" evidence="5">
    <location>
        <begin position="1"/>
        <end position="36"/>
    </location>
</feature>
<feature type="region of interest" description="Disordered" evidence="5">
    <location>
        <begin position="221"/>
        <end position="278"/>
    </location>
</feature>
<feature type="region of interest" description="Disordered" evidence="5">
    <location>
        <begin position="297"/>
        <end position="317"/>
    </location>
</feature>
<feature type="coiled-coil region" evidence="3">
    <location>
        <begin position="24"/>
        <end position="62"/>
    </location>
</feature>
<feature type="compositionally biased region" description="Basic residues" evidence="5">
    <location>
        <begin position="9"/>
        <end position="20"/>
    </location>
</feature>
<feature type="compositionally biased region" description="Basic and acidic residues" evidence="5">
    <location>
        <begin position="243"/>
        <end position="261"/>
    </location>
</feature>
<feature type="compositionally biased region" description="Polar residues" evidence="5">
    <location>
        <begin position="297"/>
        <end position="313"/>
    </location>
</feature>
<feature type="binding site" evidence="4">
    <location>
        <position position="94"/>
    </location>
    <ligand>
        <name>Zn(2+)</name>
        <dbReference type="ChEBI" id="CHEBI:29105"/>
    </ligand>
</feature>
<feature type="binding site" evidence="4">
    <location>
        <position position="99"/>
    </location>
    <ligand>
        <name>Zn(2+)</name>
        <dbReference type="ChEBI" id="CHEBI:29105"/>
    </ligand>
</feature>
<feature type="binding site" evidence="4">
    <location>
        <position position="130"/>
    </location>
    <ligand>
        <name>Zn(2+)</name>
        <dbReference type="ChEBI" id="CHEBI:29105"/>
    </ligand>
</feature>
<feature type="binding site" evidence="4">
    <location>
        <position position="134"/>
    </location>
    <ligand>
        <name>Zn(2+)</name>
        <dbReference type="ChEBI" id="CHEBI:29105"/>
    </ligand>
</feature>
<sequence>MDAGEVTRKSRPSKSKKKGGKGTQAISAEDEAKRREAVKEQLRQKLELERKARQVVERLLEDSVTEEFLMDCAWHITPANYKDTVEERSIAKLCGYPMCPNKLTNVPTQQYKISTKTNKVYDITERKCFCSNFCYKASKSFELQISKIPLWLRKEESPPEIKLMKQGDGGSSGQEIKLIDKPITEADIDNPIEDIPESNKDLIQGENGDIEQDFVSSVVSNQHKQVHWGKLPKRDEVSEDAAEYSHSEHEQRINGENKDESESSQTPQPQKDTTDHPALEKNASEIEGTLELLNQDKSTQQEGENTSSSQPESDISVPVAGDLNITQVGMSKRSAAGLKGLLKDHHKAKTASTAISQCLLERLRQAFIEWRTKETMIFLYGPDYASGMQLSTAGAWEEEQLDEDDLDEAEVGVRSAEGGPSRTSAPVPDVETLRKETEMLELRVREFYKGVCVLPEEVETAAVKETEHTQDSGKDPPLPLVDSHAQHQIQKRIVVEKLSHSLRDIVGPLRLTMSDVINDVNNLVRTFRFTNTNIIHKSPEWTLIAVVLLSVLTEVSPLLRESLASVSSLEYISCFMKELKLEDKDLHNLVLLFKPCVPIQT</sequence>
<protein>
    <recommendedName>
        <fullName>Putative RNA polymerase II subunit B1 CTD phosphatase rpap2</fullName>
        <ecNumber evidence="2">3.1.3.16</ecNumber>
    </recommendedName>
    <alternativeName>
        <fullName>RNA polymerase II-associated protein 2</fullName>
    </alternativeName>
</protein>
<gene>
    <name type="primary">rpap2</name>
    <name type="ORF">si:dkey-63k7.3</name>
</gene>
<reference key="1">
    <citation type="journal article" date="2013" name="Nature">
        <title>The zebrafish reference genome sequence and its relationship to the human genome.</title>
        <authorList>
            <person name="Howe K."/>
            <person name="Clark M.D."/>
            <person name="Torroja C.F."/>
            <person name="Torrance J."/>
            <person name="Berthelot C."/>
            <person name="Muffato M."/>
            <person name="Collins J.E."/>
            <person name="Humphray S."/>
            <person name="McLaren K."/>
            <person name="Matthews L."/>
            <person name="McLaren S."/>
            <person name="Sealy I."/>
            <person name="Caccamo M."/>
            <person name="Churcher C."/>
            <person name="Scott C."/>
            <person name="Barrett J.C."/>
            <person name="Koch R."/>
            <person name="Rauch G.J."/>
            <person name="White S."/>
            <person name="Chow W."/>
            <person name="Kilian B."/>
            <person name="Quintais L.T."/>
            <person name="Guerra-Assuncao J.A."/>
            <person name="Zhou Y."/>
            <person name="Gu Y."/>
            <person name="Yen J."/>
            <person name="Vogel J.H."/>
            <person name="Eyre T."/>
            <person name="Redmond S."/>
            <person name="Banerjee R."/>
            <person name="Chi J."/>
            <person name="Fu B."/>
            <person name="Langley E."/>
            <person name="Maguire S.F."/>
            <person name="Laird G.K."/>
            <person name="Lloyd D."/>
            <person name="Kenyon E."/>
            <person name="Donaldson S."/>
            <person name="Sehra H."/>
            <person name="Almeida-King J."/>
            <person name="Loveland J."/>
            <person name="Trevanion S."/>
            <person name="Jones M."/>
            <person name="Quail M."/>
            <person name="Willey D."/>
            <person name="Hunt A."/>
            <person name="Burton J."/>
            <person name="Sims S."/>
            <person name="McLay K."/>
            <person name="Plumb B."/>
            <person name="Davis J."/>
            <person name="Clee C."/>
            <person name="Oliver K."/>
            <person name="Clark R."/>
            <person name="Riddle C."/>
            <person name="Elliot D."/>
            <person name="Threadgold G."/>
            <person name="Harden G."/>
            <person name="Ware D."/>
            <person name="Begum S."/>
            <person name="Mortimore B."/>
            <person name="Kerry G."/>
            <person name="Heath P."/>
            <person name="Phillimore B."/>
            <person name="Tracey A."/>
            <person name="Corby N."/>
            <person name="Dunn M."/>
            <person name="Johnson C."/>
            <person name="Wood J."/>
            <person name="Clark S."/>
            <person name="Pelan S."/>
            <person name="Griffiths G."/>
            <person name="Smith M."/>
            <person name="Glithero R."/>
            <person name="Howden P."/>
            <person name="Barker N."/>
            <person name="Lloyd C."/>
            <person name="Stevens C."/>
            <person name="Harley J."/>
            <person name="Holt K."/>
            <person name="Panagiotidis G."/>
            <person name="Lovell J."/>
            <person name="Beasley H."/>
            <person name="Henderson C."/>
            <person name="Gordon D."/>
            <person name="Auger K."/>
            <person name="Wright D."/>
            <person name="Collins J."/>
            <person name="Raisen C."/>
            <person name="Dyer L."/>
            <person name="Leung K."/>
            <person name="Robertson L."/>
            <person name="Ambridge K."/>
            <person name="Leongamornlert D."/>
            <person name="McGuire S."/>
            <person name="Gilderthorp R."/>
            <person name="Griffiths C."/>
            <person name="Manthravadi D."/>
            <person name="Nichol S."/>
            <person name="Barker G."/>
            <person name="Whitehead S."/>
            <person name="Kay M."/>
            <person name="Brown J."/>
            <person name="Murnane C."/>
            <person name="Gray E."/>
            <person name="Humphries M."/>
            <person name="Sycamore N."/>
            <person name="Barker D."/>
            <person name="Saunders D."/>
            <person name="Wallis J."/>
            <person name="Babbage A."/>
            <person name="Hammond S."/>
            <person name="Mashreghi-Mohammadi M."/>
            <person name="Barr L."/>
            <person name="Martin S."/>
            <person name="Wray P."/>
            <person name="Ellington A."/>
            <person name="Matthews N."/>
            <person name="Ellwood M."/>
            <person name="Woodmansey R."/>
            <person name="Clark G."/>
            <person name="Cooper J."/>
            <person name="Tromans A."/>
            <person name="Grafham D."/>
            <person name="Skuce C."/>
            <person name="Pandian R."/>
            <person name="Andrews R."/>
            <person name="Harrison E."/>
            <person name="Kimberley A."/>
            <person name="Garnett J."/>
            <person name="Fosker N."/>
            <person name="Hall R."/>
            <person name="Garner P."/>
            <person name="Kelly D."/>
            <person name="Bird C."/>
            <person name="Palmer S."/>
            <person name="Gehring I."/>
            <person name="Berger A."/>
            <person name="Dooley C.M."/>
            <person name="Ersan-Urun Z."/>
            <person name="Eser C."/>
            <person name="Geiger H."/>
            <person name="Geisler M."/>
            <person name="Karotki L."/>
            <person name="Kirn A."/>
            <person name="Konantz J."/>
            <person name="Konantz M."/>
            <person name="Oberlander M."/>
            <person name="Rudolph-Geiger S."/>
            <person name="Teucke M."/>
            <person name="Lanz C."/>
            <person name="Raddatz G."/>
            <person name="Osoegawa K."/>
            <person name="Zhu B."/>
            <person name="Rapp A."/>
            <person name="Widaa S."/>
            <person name="Langford C."/>
            <person name="Yang F."/>
            <person name="Schuster S.C."/>
            <person name="Carter N.P."/>
            <person name="Harrow J."/>
            <person name="Ning Z."/>
            <person name="Herrero J."/>
            <person name="Searle S.M."/>
            <person name="Enright A."/>
            <person name="Geisler R."/>
            <person name="Plasterk R.H."/>
            <person name="Lee C."/>
            <person name="Westerfield M."/>
            <person name="de Jong P.J."/>
            <person name="Zon L.I."/>
            <person name="Postlethwait J.H."/>
            <person name="Nusslein-Volhard C."/>
            <person name="Hubbard T.J."/>
            <person name="Roest Crollius H."/>
            <person name="Rogers J."/>
            <person name="Stemple D.L."/>
        </authorList>
    </citation>
    <scope>NUCLEOTIDE SEQUENCE [LARGE SCALE GENOMIC DNA]</scope>
    <source>
        <strain>Tuebingen</strain>
    </source>
</reference>
<evidence type="ECO:0000250" key="1"/>
<evidence type="ECO:0000250" key="2">
    <source>
        <dbReference type="UniProtKB" id="Q8IXW5"/>
    </source>
</evidence>
<evidence type="ECO:0000255" key="3"/>
<evidence type="ECO:0000255" key="4">
    <source>
        <dbReference type="PROSITE-ProRule" id="PRU00812"/>
    </source>
</evidence>
<evidence type="ECO:0000256" key="5">
    <source>
        <dbReference type="SAM" id="MobiDB-lite"/>
    </source>
</evidence>
<evidence type="ECO:0000305" key="6"/>
<organism>
    <name type="scientific">Danio rerio</name>
    <name type="common">Zebrafish</name>
    <name type="synonym">Brachydanio rerio</name>
    <dbReference type="NCBI Taxonomy" id="7955"/>
    <lineage>
        <taxon>Eukaryota</taxon>
        <taxon>Metazoa</taxon>
        <taxon>Chordata</taxon>
        <taxon>Craniata</taxon>
        <taxon>Vertebrata</taxon>
        <taxon>Euteleostomi</taxon>
        <taxon>Actinopterygii</taxon>
        <taxon>Neopterygii</taxon>
        <taxon>Teleostei</taxon>
        <taxon>Ostariophysi</taxon>
        <taxon>Cypriniformes</taxon>
        <taxon>Danionidae</taxon>
        <taxon>Danioninae</taxon>
        <taxon>Danio</taxon>
    </lineage>
</organism>
<name>RPAP2_DANRE</name>
<keyword id="KW-0175">Coiled coil</keyword>
<keyword id="KW-0963">Cytoplasm</keyword>
<keyword id="KW-0378">Hydrolase</keyword>
<keyword id="KW-0479">Metal-binding</keyword>
<keyword id="KW-0539">Nucleus</keyword>
<keyword id="KW-0904">Protein phosphatase</keyword>
<keyword id="KW-1185">Reference proteome</keyword>
<keyword id="KW-0804">Transcription</keyword>
<keyword id="KW-0805">Transcription regulation</keyword>
<keyword id="KW-0862">Zinc</keyword>
<keyword id="KW-0863">Zinc-finger</keyword>
<accession>B0UYH6</accession>
<proteinExistence type="inferred from homology"/>
<comment type="function">
    <text evidence="2">Protein phosphatase that displays CTD phosphatase activity and regulates transcription of snRNA genes. Recognizes and binds phosphorylated 'Ser-7' of the C-terminal heptapeptide repeat domain (CTD) of the largest RNA polymerase II subunit POLR2A, and mediates dephosphorylation of 'Ser-5' of the CTD, thereby promoting transcription of snRNA genes (By similarity). Downstream of EIF2AK3/PERK, dephosphorylates ERN1, a sensor for the endoplasmic reticulum unfolded protein response (UPR), to abort failed ER-stress adaptation and trigger apoptosis (By similarity).</text>
</comment>
<comment type="catalytic activity">
    <reaction evidence="2">
        <text>O-phospho-L-seryl-[protein] + H2O = L-seryl-[protein] + phosphate</text>
        <dbReference type="Rhea" id="RHEA:20629"/>
        <dbReference type="Rhea" id="RHEA-COMP:9863"/>
        <dbReference type="Rhea" id="RHEA-COMP:11604"/>
        <dbReference type="ChEBI" id="CHEBI:15377"/>
        <dbReference type="ChEBI" id="CHEBI:29999"/>
        <dbReference type="ChEBI" id="CHEBI:43474"/>
        <dbReference type="ChEBI" id="CHEBI:83421"/>
        <dbReference type="EC" id="3.1.3.16"/>
    </reaction>
</comment>
<comment type="catalytic activity">
    <reaction>
        <text>O-phospho-L-threonyl-[protein] + H2O = L-threonyl-[protein] + phosphate</text>
        <dbReference type="Rhea" id="RHEA:47004"/>
        <dbReference type="Rhea" id="RHEA-COMP:11060"/>
        <dbReference type="Rhea" id="RHEA-COMP:11605"/>
        <dbReference type="ChEBI" id="CHEBI:15377"/>
        <dbReference type="ChEBI" id="CHEBI:30013"/>
        <dbReference type="ChEBI" id="CHEBI:43474"/>
        <dbReference type="ChEBI" id="CHEBI:61977"/>
        <dbReference type="EC" id="3.1.3.16"/>
    </reaction>
</comment>
<comment type="subunit">
    <text evidence="1">Associates with the RNA polymerase II complex.</text>
</comment>
<comment type="subcellular location">
    <subcellularLocation>
        <location evidence="1">Cytoplasm</location>
    </subcellularLocation>
    <subcellularLocation>
        <location evidence="1">Nucleus</location>
    </subcellularLocation>
</comment>
<comment type="similarity">
    <text evidence="4 6">Belongs to the RPAP2 family.</text>
</comment>
<dbReference type="EC" id="3.1.3.16" evidence="2"/>
<dbReference type="EMBL" id="CR450845">
    <property type="protein sequence ID" value="CAQ13680.1"/>
    <property type="molecule type" value="Genomic_DNA"/>
</dbReference>
<dbReference type="RefSeq" id="NP_001264859.1">
    <property type="nucleotide sequence ID" value="NM_001277930.1"/>
</dbReference>
<dbReference type="SMR" id="B0UYH6"/>
<dbReference type="FunCoup" id="B0UYH6">
    <property type="interactions" value="861"/>
</dbReference>
<dbReference type="STRING" id="7955.ENSDARP00000056033"/>
<dbReference type="PaxDb" id="7955-ENSDARP00000056033"/>
<dbReference type="PeptideAtlas" id="B0UYH6"/>
<dbReference type="Ensembl" id="ENSDART00000056034">
    <property type="protein sequence ID" value="ENSDARP00000056033"/>
    <property type="gene ID" value="ENSDARG00000038397"/>
</dbReference>
<dbReference type="GeneID" id="554138"/>
<dbReference type="KEGG" id="dre:554138"/>
<dbReference type="AGR" id="ZFIN:ZDB-GENE-050522-420"/>
<dbReference type="CTD" id="79871"/>
<dbReference type="ZFIN" id="ZDB-GENE-050522-420">
    <property type="gene designation" value="rpap2"/>
</dbReference>
<dbReference type="eggNOG" id="KOG4780">
    <property type="taxonomic scope" value="Eukaryota"/>
</dbReference>
<dbReference type="HOGENOM" id="CLU_019258_1_0_1"/>
<dbReference type="InParanoid" id="B0UYH6"/>
<dbReference type="OMA" id="YPICQNK"/>
<dbReference type="OrthoDB" id="2590500at2759"/>
<dbReference type="PhylomeDB" id="B0UYH6"/>
<dbReference type="TreeFam" id="TF331431"/>
<dbReference type="Reactome" id="R-DRE-6807505">
    <property type="pathway name" value="RNA polymerase II transcribes snRNA genes"/>
</dbReference>
<dbReference type="PRO" id="PR:B0UYH6"/>
<dbReference type="Proteomes" id="UP000000437">
    <property type="component" value="Chromosome 2"/>
</dbReference>
<dbReference type="Bgee" id="ENSDARG00000038397">
    <property type="expression patterns" value="Expressed in somite and 28 other cell types or tissues"/>
</dbReference>
<dbReference type="GO" id="GO:0005737">
    <property type="term" value="C:cytoplasm"/>
    <property type="evidence" value="ECO:0000250"/>
    <property type="project" value="UniProtKB"/>
</dbReference>
<dbReference type="GO" id="GO:0005634">
    <property type="term" value="C:nucleus"/>
    <property type="evidence" value="ECO:0000250"/>
    <property type="project" value="UniProtKB"/>
</dbReference>
<dbReference type="GO" id="GO:0097550">
    <property type="term" value="C:transcription preinitiation complex"/>
    <property type="evidence" value="ECO:0000250"/>
    <property type="project" value="UniProtKB"/>
</dbReference>
<dbReference type="GO" id="GO:0004722">
    <property type="term" value="F:protein serine/threonine phosphatase activity"/>
    <property type="evidence" value="ECO:0000250"/>
    <property type="project" value="UniProtKB"/>
</dbReference>
<dbReference type="GO" id="GO:0043175">
    <property type="term" value="F:RNA polymerase core enzyme binding"/>
    <property type="evidence" value="ECO:0007669"/>
    <property type="project" value="InterPro"/>
</dbReference>
<dbReference type="GO" id="GO:0008420">
    <property type="term" value="F:RNA polymerase II CTD heptapeptide repeat phosphatase activity"/>
    <property type="evidence" value="ECO:0000250"/>
    <property type="project" value="UniProtKB"/>
</dbReference>
<dbReference type="GO" id="GO:0008270">
    <property type="term" value="F:zinc ion binding"/>
    <property type="evidence" value="ECO:0007669"/>
    <property type="project" value="UniProtKB-KW"/>
</dbReference>
<dbReference type="GO" id="GO:0036499">
    <property type="term" value="P:PERK-mediated unfolded protein response"/>
    <property type="evidence" value="ECO:0000250"/>
    <property type="project" value="UniProtKB"/>
</dbReference>
<dbReference type="GO" id="GO:0009301">
    <property type="term" value="P:snRNA transcription"/>
    <property type="evidence" value="ECO:0000250"/>
    <property type="project" value="UniProtKB"/>
</dbReference>
<dbReference type="FunFam" id="1.25.40.820:FF:000019">
    <property type="entry name" value="Putative RNA polymerase II subunit B1 CTD phosphatase rpap2"/>
    <property type="match status" value="1"/>
</dbReference>
<dbReference type="Gene3D" id="1.25.40.820">
    <property type="match status" value="1"/>
</dbReference>
<dbReference type="InterPro" id="IPR039693">
    <property type="entry name" value="Rtr1/RPAP2"/>
</dbReference>
<dbReference type="InterPro" id="IPR007308">
    <property type="entry name" value="Rtr1/RPAP2_dom"/>
</dbReference>
<dbReference type="InterPro" id="IPR038534">
    <property type="entry name" value="Rtr1/RPAP2_sf"/>
</dbReference>
<dbReference type="PANTHER" id="PTHR14732">
    <property type="entry name" value="RNA POLYMERASE II SUBUNIT B1 CTD PHOSPHATASE RPAP2-RELATED"/>
    <property type="match status" value="1"/>
</dbReference>
<dbReference type="PANTHER" id="PTHR14732:SF0">
    <property type="entry name" value="RNA POLYMERASE II SUBUNIT B1 CTD PHOSPHATASE RPAP2-RELATED"/>
    <property type="match status" value="1"/>
</dbReference>
<dbReference type="Pfam" id="PF04181">
    <property type="entry name" value="RPAP2_Rtr1"/>
    <property type="match status" value="1"/>
</dbReference>
<dbReference type="PROSITE" id="PS51479">
    <property type="entry name" value="ZF_RTR1"/>
    <property type="match status" value="1"/>
</dbReference>